<dbReference type="EMBL" id="BX548174">
    <property type="protein sequence ID" value="CAE19966.1"/>
    <property type="molecule type" value="Genomic_DNA"/>
</dbReference>
<dbReference type="RefSeq" id="WP_011133135.1">
    <property type="nucleotide sequence ID" value="NC_005072.1"/>
</dbReference>
<dbReference type="SMR" id="Q7UZY8"/>
<dbReference type="STRING" id="59919.PMM1507"/>
<dbReference type="KEGG" id="pmm:PMM1507"/>
<dbReference type="eggNOG" id="COG0051">
    <property type="taxonomic scope" value="Bacteria"/>
</dbReference>
<dbReference type="HOGENOM" id="CLU_122625_1_3_3"/>
<dbReference type="OrthoDB" id="9804464at2"/>
<dbReference type="Proteomes" id="UP000001026">
    <property type="component" value="Chromosome"/>
</dbReference>
<dbReference type="GO" id="GO:1990904">
    <property type="term" value="C:ribonucleoprotein complex"/>
    <property type="evidence" value="ECO:0007669"/>
    <property type="project" value="UniProtKB-KW"/>
</dbReference>
<dbReference type="GO" id="GO:0005840">
    <property type="term" value="C:ribosome"/>
    <property type="evidence" value="ECO:0007669"/>
    <property type="project" value="UniProtKB-KW"/>
</dbReference>
<dbReference type="GO" id="GO:0003735">
    <property type="term" value="F:structural constituent of ribosome"/>
    <property type="evidence" value="ECO:0007669"/>
    <property type="project" value="InterPro"/>
</dbReference>
<dbReference type="GO" id="GO:0000049">
    <property type="term" value="F:tRNA binding"/>
    <property type="evidence" value="ECO:0007669"/>
    <property type="project" value="UniProtKB-UniRule"/>
</dbReference>
<dbReference type="GO" id="GO:0006412">
    <property type="term" value="P:translation"/>
    <property type="evidence" value="ECO:0007669"/>
    <property type="project" value="UniProtKB-UniRule"/>
</dbReference>
<dbReference type="FunFam" id="3.30.70.600:FF:000001">
    <property type="entry name" value="30S ribosomal protein S10"/>
    <property type="match status" value="1"/>
</dbReference>
<dbReference type="Gene3D" id="3.30.70.600">
    <property type="entry name" value="Ribosomal protein S10 domain"/>
    <property type="match status" value="1"/>
</dbReference>
<dbReference type="HAMAP" id="MF_00508">
    <property type="entry name" value="Ribosomal_uS10"/>
    <property type="match status" value="1"/>
</dbReference>
<dbReference type="InterPro" id="IPR001848">
    <property type="entry name" value="Ribosomal_uS10"/>
</dbReference>
<dbReference type="InterPro" id="IPR027486">
    <property type="entry name" value="Ribosomal_uS10_dom"/>
</dbReference>
<dbReference type="InterPro" id="IPR036838">
    <property type="entry name" value="Ribosomal_uS10_dom_sf"/>
</dbReference>
<dbReference type="NCBIfam" id="NF001861">
    <property type="entry name" value="PRK00596.1"/>
    <property type="match status" value="1"/>
</dbReference>
<dbReference type="NCBIfam" id="TIGR01049">
    <property type="entry name" value="rpsJ_bact"/>
    <property type="match status" value="1"/>
</dbReference>
<dbReference type="PANTHER" id="PTHR11700">
    <property type="entry name" value="30S RIBOSOMAL PROTEIN S10 FAMILY MEMBER"/>
    <property type="match status" value="1"/>
</dbReference>
<dbReference type="Pfam" id="PF00338">
    <property type="entry name" value="Ribosomal_S10"/>
    <property type="match status" value="1"/>
</dbReference>
<dbReference type="PRINTS" id="PR00971">
    <property type="entry name" value="RIBOSOMALS10"/>
</dbReference>
<dbReference type="SMART" id="SM01403">
    <property type="entry name" value="Ribosomal_S10"/>
    <property type="match status" value="1"/>
</dbReference>
<dbReference type="SUPFAM" id="SSF54999">
    <property type="entry name" value="Ribosomal protein S10"/>
    <property type="match status" value="1"/>
</dbReference>
<keyword id="KW-0687">Ribonucleoprotein</keyword>
<keyword id="KW-0689">Ribosomal protein</keyword>
<proteinExistence type="inferred from homology"/>
<protein>
    <recommendedName>
        <fullName evidence="1">Small ribosomal subunit protein uS10</fullName>
    </recommendedName>
    <alternativeName>
        <fullName evidence="2">30S ribosomal protein S10</fullName>
    </alternativeName>
</protein>
<sequence>MTASLTQQKIRIRLKAFDRRMLDLSCDKIIQTADTTAASAIGPIPLPTKRKIYCVLRSPHVDKDSREHFETRTHRRIIDIYSPSAKTIDALMKLDLPSGVDIEVKL</sequence>
<organism>
    <name type="scientific">Prochlorococcus marinus subsp. pastoris (strain CCMP1986 / NIES-2087 / MED4)</name>
    <dbReference type="NCBI Taxonomy" id="59919"/>
    <lineage>
        <taxon>Bacteria</taxon>
        <taxon>Bacillati</taxon>
        <taxon>Cyanobacteriota</taxon>
        <taxon>Cyanophyceae</taxon>
        <taxon>Synechococcales</taxon>
        <taxon>Prochlorococcaceae</taxon>
        <taxon>Prochlorococcus</taxon>
    </lineage>
</organism>
<feature type="chain" id="PRO_0000146577" description="Small ribosomal subunit protein uS10">
    <location>
        <begin position="1"/>
        <end position="106"/>
    </location>
</feature>
<gene>
    <name evidence="1" type="primary">rpsJ</name>
    <name evidence="1" type="synonym">rps10</name>
    <name type="ordered locus">PMM1507</name>
</gene>
<name>RS10_PROMP</name>
<evidence type="ECO:0000255" key="1">
    <source>
        <dbReference type="HAMAP-Rule" id="MF_00508"/>
    </source>
</evidence>
<evidence type="ECO:0000305" key="2"/>
<reference key="1">
    <citation type="journal article" date="2003" name="Nature">
        <title>Genome divergence in two Prochlorococcus ecotypes reflects oceanic niche differentiation.</title>
        <authorList>
            <person name="Rocap G."/>
            <person name="Larimer F.W."/>
            <person name="Lamerdin J.E."/>
            <person name="Malfatti S."/>
            <person name="Chain P."/>
            <person name="Ahlgren N.A."/>
            <person name="Arellano A."/>
            <person name="Coleman M."/>
            <person name="Hauser L."/>
            <person name="Hess W.R."/>
            <person name="Johnson Z.I."/>
            <person name="Land M.L."/>
            <person name="Lindell D."/>
            <person name="Post A.F."/>
            <person name="Regala W."/>
            <person name="Shah M."/>
            <person name="Shaw S.L."/>
            <person name="Steglich C."/>
            <person name="Sullivan M.B."/>
            <person name="Ting C.S."/>
            <person name="Tolonen A."/>
            <person name="Webb E.A."/>
            <person name="Zinser E.R."/>
            <person name="Chisholm S.W."/>
        </authorList>
    </citation>
    <scope>NUCLEOTIDE SEQUENCE [LARGE SCALE GENOMIC DNA]</scope>
    <source>
        <strain>CCMP1986 / NIES-2087 / MED4</strain>
    </source>
</reference>
<comment type="function">
    <text evidence="1">Involved in the binding of tRNA to the ribosomes.</text>
</comment>
<comment type="subunit">
    <text evidence="1">Part of the 30S ribosomal subunit.</text>
</comment>
<comment type="similarity">
    <text evidence="1">Belongs to the universal ribosomal protein uS10 family.</text>
</comment>
<accession>Q7UZY8</accession>